<dbReference type="EC" id="3.1.26.5" evidence="1"/>
<dbReference type="EMBL" id="CP000548">
    <property type="protein sequence ID" value="ABO05585.1"/>
    <property type="molecule type" value="Genomic_DNA"/>
</dbReference>
<dbReference type="SMR" id="A3MS22"/>
<dbReference type="KEGG" id="bmn:BMA10247_3552"/>
<dbReference type="GO" id="GO:0030677">
    <property type="term" value="C:ribonuclease P complex"/>
    <property type="evidence" value="ECO:0007669"/>
    <property type="project" value="TreeGrafter"/>
</dbReference>
<dbReference type="GO" id="GO:0042781">
    <property type="term" value="F:3'-tRNA processing endoribonuclease activity"/>
    <property type="evidence" value="ECO:0007669"/>
    <property type="project" value="TreeGrafter"/>
</dbReference>
<dbReference type="GO" id="GO:0004526">
    <property type="term" value="F:ribonuclease P activity"/>
    <property type="evidence" value="ECO:0007669"/>
    <property type="project" value="UniProtKB-UniRule"/>
</dbReference>
<dbReference type="GO" id="GO:0000049">
    <property type="term" value="F:tRNA binding"/>
    <property type="evidence" value="ECO:0007669"/>
    <property type="project" value="UniProtKB-UniRule"/>
</dbReference>
<dbReference type="GO" id="GO:0001682">
    <property type="term" value="P:tRNA 5'-leader removal"/>
    <property type="evidence" value="ECO:0007669"/>
    <property type="project" value="UniProtKB-UniRule"/>
</dbReference>
<dbReference type="Gene3D" id="3.30.230.10">
    <property type="match status" value="1"/>
</dbReference>
<dbReference type="HAMAP" id="MF_00227">
    <property type="entry name" value="RNase_P"/>
    <property type="match status" value="1"/>
</dbReference>
<dbReference type="InterPro" id="IPR020568">
    <property type="entry name" value="Ribosomal_Su5_D2-typ_SF"/>
</dbReference>
<dbReference type="InterPro" id="IPR014721">
    <property type="entry name" value="Ribsml_uS5_D2-typ_fold_subgr"/>
</dbReference>
<dbReference type="InterPro" id="IPR000100">
    <property type="entry name" value="RNase_P"/>
</dbReference>
<dbReference type="InterPro" id="IPR020539">
    <property type="entry name" value="RNase_P_CS"/>
</dbReference>
<dbReference type="NCBIfam" id="TIGR00188">
    <property type="entry name" value="rnpA"/>
    <property type="match status" value="1"/>
</dbReference>
<dbReference type="PANTHER" id="PTHR33992">
    <property type="entry name" value="RIBONUCLEASE P PROTEIN COMPONENT"/>
    <property type="match status" value="1"/>
</dbReference>
<dbReference type="PANTHER" id="PTHR33992:SF1">
    <property type="entry name" value="RIBONUCLEASE P PROTEIN COMPONENT"/>
    <property type="match status" value="1"/>
</dbReference>
<dbReference type="Pfam" id="PF00825">
    <property type="entry name" value="Ribonuclease_P"/>
    <property type="match status" value="1"/>
</dbReference>
<dbReference type="SUPFAM" id="SSF54211">
    <property type="entry name" value="Ribosomal protein S5 domain 2-like"/>
    <property type="match status" value="1"/>
</dbReference>
<dbReference type="PROSITE" id="PS00648">
    <property type="entry name" value="RIBONUCLEASE_P"/>
    <property type="match status" value="1"/>
</dbReference>
<reference key="1">
    <citation type="journal article" date="2010" name="Genome Biol. Evol.">
        <title>Continuing evolution of Burkholderia mallei through genome reduction and large-scale rearrangements.</title>
        <authorList>
            <person name="Losada L."/>
            <person name="Ronning C.M."/>
            <person name="DeShazer D."/>
            <person name="Woods D."/>
            <person name="Fedorova N."/>
            <person name="Kim H.S."/>
            <person name="Shabalina S.A."/>
            <person name="Pearson T.R."/>
            <person name="Brinkac L."/>
            <person name="Tan P."/>
            <person name="Nandi T."/>
            <person name="Crabtree J."/>
            <person name="Badger J."/>
            <person name="Beckstrom-Sternberg S."/>
            <person name="Saqib M."/>
            <person name="Schutzer S.E."/>
            <person name="Keim P."/>
            <person name="Nierman W.C."/>
        </authorList>
    </citation>
    <scope>NUCLEOTIDE SEQUENCE [LARGE SCALE GENOMIC DNA]</scope>
    <source>
        <strain>NCTC 10247</strain>
    </source>
</reference>
<organism>
    <name type="scientific">Burkholderia mallei (strain NCTC 10247)</name>
    <dbReference type="NCBI Taxonomy" id="320389"/>
    <lineage>
        <taxon>Bacteria</taxon>
        <taxon>Pseudomonadati</taxon>
        <taxon>Pseudomonadota</taxon>
        <taxon>Betaproteobacteria</taxon>
        <taxon>Burkholderiales</taxon>
        <taxon>Burkholderiaceae</taxon>
        <taxon>Burkholderia</taxon>
        <taxon>pseudomallei group</taxon>
    </lineage>
</organism>
<proteinExistence type="inferred from homology"/>
<protein>
    <recommendedName>
        <fullName evidence="1">Ribonuclease P protein component</fullName>
        <shortName evidence="1">RNase P protein</shortName>
        <shortName evidence="1">RNaseP protein</shortName>
        <ecNumber evidence="1">3.1.26.5</ecNumber>
    </recommendedName>
    <alternativeName>
        <fullName evidence="1">Protein C5</fullName>
    </alternativeName>
</protein>
<feature type="chain" id="PRO_1000021381" description="Ribonuclease P protein component">
    <location>
        <begin position="1"/>
        <end position="136"/>
    </location>
</feature>
<evidence type="ECO:0000255" key="1">
    <source>
        <dbReference type="HAMAP-Rule" id="MF_00227"/>
    </source>
</evidence>
<accession>A3MS22</accession>
<sequence>MQASAAFPKAARLLKTDEFSSVFRLRPWRRTAHFVIYGKPTGRDARLGLVIGKKYAARAVTRNLVKRLAREAFRTRRAEFAGWDILLRLHTRFDKKAMPSAASAPLAALCAGEIRELLDRAAREVARRNGAKPASE</sequence>
<gene>
    <name evidence="1" type="primary">rnpA</name>
    <name type="ordered locus">BMA10247_3552</name>
</gene>
<name>RNPA_BURM7</name>
<comment type="function">
    <text evidence="1">RNaseP catalyzes the removal of the 5'-leader sequence from pre-tRNA to produce the mature 5'-terminus. It can also cleave other RNA substrates such as 4.5S RNA. The protein component plays an auxiliary but essential role in vivo by binding to the 5'-leader sequence and broadening the substrate specificity of the ribozyme.</text>
</comment>
<comment type="catalytic activity">
    <reaction evidence="1">
        <text>Endonucleolytic cleavage of RNA, removing 5'-extranucleotides from tRNA precursor.</text>
        <dbReference type="EC" id="3.1.26.5"/>
    </reaction>
</comment>
<comment type="subunit">
    <text evidence="1">Consists of a catalytic RNA component (M1 or rnpB) and a protein subunit.</text>
</comment>
<comment type="similarity">
    <text evidence="1">Belongs to the RnpA family.</text>
</comment>
<keyword id="KW-0255">Endonuclease</keyword>
<keyword id="KW-0378">Hydrolase</keyword>
<keyword id="KW-0540">Nuclease</keyword>
<keyword id="KW-0694">RNA-binding</keyword>
<keyword id="KW-0819">tRNA processing</keyword>